<gene>
    <name evidence="1" type="primary">groEL</name>
    <name evidence="1" type="synonym">groL</name>
    <name type="ordered locus">CT0530</name>
</gene>
<name>CH60_CHLTE</name>
<feature type="chain" id="PRO_0000063331" description="Chaperonin GroEL">
    <location>
        <begin position="1"/>
        <end position="545"/>
    </location>
</feature>
<feature type="binding site" evidence="1">
    <location>
        <begin position="30"/>
        <end position="33"/>
    </location>
    <ligand>
        <name>ATP</name>
        <dbReference type="ChEBI" id="CHEBI:30616"/>
    </ligand>
</feature>
<feature type="binding site" evidence="1">
    <location>
        <position position="51"/>
    </location>
    <ligand>
        <name>ATP</name>
        <dbReference type="ChEBI" id="CHEBI:30616"/>
    </ligand>
</feature>
<feature type="binding site" evidence="1">
    <location>
        <begin position="87"/>
        <end position="91"/>
    </location>
    <ligand>
        <name>ATP</name>
        <dbReference type="ChEBI" id="CHEBI:30616"/>
    </ligand>
</feature>
<feature type="binding site" evidence="1">
    <location>
        <position position="415"/>
    </location>
    <ligand>
        <name>ATP</name>
        <dbReference type="ChEBI" id="CHEBI:30616"/>
    </ligand>
</feature>
<feature type="binding site" evidence="1">
    <location>
        <position position="496"/>
    </location>
    <ligand>
        <name>ATP</name>
        <dbReference type="ChEBI" id="CHEBI:30616"/>
    </ligand>
</feature>
<feature type="strand" evidence="2">
    <location>
        <begin position="4"/>
        <end position="8"/>
    </location>
</feature>
<feature type="helix" evidence="2">
    <location>
        <begin position="9"/>
        <end position="27"/>
    </location>
</feature>
<feature type="helix" evidence="2">
    <location>
        <begin position="28"/>
        <end position="30"/>
    </location>
</feature>
<feature type="strand" evidence="2">
    <location>
        <begin position="37"/>
        <end position="40"/>
    </location>
</feature>
<feature type="strand" evidence="2">
    <location>
        <begin position="43"/>
        <end position="46"/>
    </location>
</feature>
<feature type="strand" evidence="2">
    <location>
        <begin position="48"/>
        <end position="50"/>
    </location>
</feature>
<feature type="helix" evidence="2">
    <location>
        <begin position="53"/>
        <end position="58"/>
    </location>
</feature>
<feature type="helix" evidence="2">
    <location>
        <begin position="65"/>
        <end position="84"/>
    </location>
</feature>
<feature type="strand" evidence="2">
    <location>
        <begin position="85"/>
        <end position="87"/>
    </location>
</feature>
<feature type="helix" evidence="2">
    <location>
        <begin position="89"/>
        <end position="108"/>
    </location>
</feature>
<feature type="helix" evidence="2">
    <location>
        <begin position="113"/>
        <end position="133"/>
    </location>
</feature>
<feature type="helix" evidence="2">
    <location>
        <begin position="141"/>
        <end position="151"/>
    </location>
</feature>
<feature type="helix" evidence="2">
    <location>
        <begin position="156"/>
        <end position="169"/>
    </location>
</feature>
<feature type="strand" evidence="2">
    <location>
        <begin position="175"/>
        <end position="179"/>
    </location>
</feature>
<feature type="strand" evidence="2">
    <location>
        <begin position="181"/>
        <end position="183"/>
    </location>
</feature>
<feature type="strand" evidence="2">
    <location>
        <begin position="186"/>
        <end position="191"/>
    </location>
</feature>
<feature type="strand" evidence="2">
    <location>
        <begin position="193"/>
        <end position="196"/>
    </location>
</feature>
<feature type="helix" evidence="2">
    <location>
        <begin position="202"/>
        <end position="204"/>
    </location>
</feature>
<feature type="turn" evidence="2">
    <location>
        <begin position="208"/>
        <end position="211"/>
    </location>
</feature>
<feature type="strand" evidence="2">
    <location>
        <begin position="212"/>
        <end position="217"/>
    </location>
</feature>
<feature type="strand" evidence="2">
    <location>
        <begin position="219"/>
        <end position="225"/>
    </location>
</feature>
<feature type="helix" evidence="2">
    <location>
        <begin position="234"/>
        <end position="240"/>
    </location>
</feature>
<feature type="strand" evidence="2">
    <location>
        <begin position="247"/>
        <end position="251"/>
    </location>
</feature>
<feature type="helix" evidence="2">
    <location>
        <begin position="258"/>
        <end position="267"/>
    </location>
</feature>
<feature type="strand" evidence="2">
    <location>
        <begin position="268"/>
        <end position="270"/>
    </location>
</feature>
<feature type="strand" evidence="2">
    <location>
        <begin position="273"/>
        <end position="277"/>
    </location>
</feature>
<feature type="helix" evidence="2">
    <location>
        <begin position="283"/>
        <end position="296"/>
    </location>
</feature>
<feature type="helix" evidence="2">
    <location>
        <begin position="314"/>
        <end position="316"/>
    </location>
</feature>
<feature type="strand" evidence="2">
    <location>
        <begin position="322"/>
        <end position="325"/>
    </location>
</feature>
<feature type="strand" evidence="2">
    <location>
        <begin position="330"/>
        <end position="334"/>
    </location>
</feature>
<feature type="helix" evidence="2">
    <location>
        <begin position="339"/>
        <end position="353"/>
    </location>
</feature>
<feature type="helix" evidence="2">
    <location>
        <begin position="361"/>
        <end position="374"/>
    </location>
</feature>
<feature type="strand" evidence="2">
    <location>
        <begin position="376"/>
        <end position="381"/>
    </location>
</feature>
<feature type="helix" evidence="2">
    <location>
        <begin position="386"/>
        <end position="409"/>
    </location>
</feature>
<feature type="strand" evidence="2">
    <location>
        <begin position="411"/>
        <end position="413"/>
    </location>
</feature>
<feature type="turn" evidence="2">
    <location>
        <begin position="414"/>
        <end position="416"/>
    </location>
</feature>
<feature type="helix" evidence="2">
    <location>
        <begin position="417"/>
        <end position="421"/>
    </location>
</feature>
<feature type="helix" evidence="2">
    <location>
        <begin position="422"/>
        <end position="428"/>
    </location>
</feature>
<feature type="helix" evidence="2">
    <location>
        <begin position="434"/>
        <end position="446"/>
    </location>
</feature>
<feature type="helix" evidence="2">
    <location>
        <begin position="449"/>
        <end position="456"/>
    </location>
</feature>
<feature type="turn" evidence="2">
    <location>
        <begin position="457"/>
        <end position="459"/>
    </location>
</feature>
<feature type="helix" evidence="2">
    <location>
        <begin position="463"/>
        <end position="472"/>
    </location>
</feature>
<feature type="strand" evidence="2">
    <location>
        <begin position="477"/>
        <end position="480"/>
    </location>
</feature>
<feature type="turn" evidence="2">
    <location>
        <begin position="481"/>
        <end position="484"/>
    </location>
</feature>
<feature type="strand" evidence="2">
    <location>
        <begin position="485"/>
        <end position="488"/>
    </location>
</feature>
<feature type="turn" evidence="2">
    <location>
        <begin position="489"/>
        <end position="493"/>
    </location>
</feature>
<feature type="strand" evidence="2">
    <location>
        <begin position="495"/>
        <end position="497"/>
    </location>
</feature>
<feature type="helix" evidence="2">
    <location>
        <begin position="498"/>
        <end position="516"/>
    </location>
</feature>
<feature type="strand" evidence="2">
    <location>
        <begin position="518"/>
        <end position="524"/>
    </location>
</feature>
<evidence type="ECO:0000255" key="1">
    <source>
        <dbReference type="HAMAP-Rule" id="MF_00600"/>
    </source>
</evidence>
<evidence type="ECO:0007829" key="2">
    <source>
        <dbReference type="PDB" id="5DA8"/>
    </source>
</evidence>
<proteinExistence type="evidence at protein level"/>
<accession>Q8KF02</accession>
<organism>
    <name type="scientific">Chlorobaculum tepidum (strain ATCC 49652 / DSM 12025 / NBRC 103806 / TLS)</name>
    <name type="common">Chlorobium tepidum</name>
    <dbReference type="NCBI Taxonomy" id="194439"/>
    <lineage>
        <taxon>Bacteria</taxon>
        <taxon>Pseudomonadati</taxon>
        <taxon>Chlorobiota</taxon>
        <taxon>Chlorobiia</taxon>
        <taxon>Chlorobiales</taxon>
        <taxon>Chlorobiaceae</taxon>
        <taxon>Chlorobaculum</taxon>
    </lineage>
</organism>
<keyword id="KW-0002">3D-structure</keyword>
<keyword id="KW-0067">ATP-binding</keyword>
<keyword id="KW-0143">Chaperone</keyword>
<keyword id="KW-0963">Cytoplasm</keyword>
<keyword id="KW-0413">Isomerase</keyword>
<keyword id="KW-0547">Nucleotide-binding</keyword>
<keyword id="KW-1185">Reference proteome</keyword>
<protein>
    <recommendedName>
        <fullName evidence="1">Chaperonin GroEL</fullName>
        <ecNumber evidence="1">5.6.1.7</ecNumber>
    </recommendedName>
    <alternativeName>
        <fullName evidence="1">60 kDa chaperonin</fullName>
    </alternativeName>
    <alternativeName>
        <fullName evidence="1">Chaperonin-60</fullName>
        <shortName evidence="1">Cpn60</shortName>
    </alternativeName>
</protein>
<reference key="1">
    <citation type="journal article" date="2002" name="Proc. Natl. Acad. Sci. U.S.A.">
        <title>The complete genome sequence of Chlorobium tepidum TLS, a photosynthetic, anaerobic, green-sulfur bacterium.</title>
        <authorList>
            <person name="Eisen J.A."/>
            <person name="Nelson K.E."/>
            <person name="Paulsen I.T."/>
            <person name="Heidelberg J.F."/>
            <person name="Wu M."/>
            <person name="Dodson R.J."/>
            <person name="DeBoy R.T."/>
            <person name="Gwinn M.L."/>
            <person name="Nelson W.C."/>
            <person name="Haft D.H."/>
            <person name="Hickey E.K."/>
            <person name="Peterson J.D."/>
            <person name="Durkin A.S."/>
            <person name="Kolonay J.F."/>
            <person name="Yang F."/>
            <person name="Holt I.E."/>
            <person name="Umayam L.A."/>
            <person name="Mason T.M."/>
            <person name="Brenner M."/>
            <person name="Shea T.P."/>
            <person name="Parksey D.S."/>
            <person name="Nierman W.C."/>
            <person name="Feldblyum T.V."/>
            <person name="Hansen C.L."/>
            <person name="Craven M.B."/>
            <person name="Radune D."/>
            <person name="Vamathevan J.J."/>
            <person name="Khouri H.M."/>
            <person name="White O."/>
            <person name="Gruber T.M."/>
            <person name="Ketchum K.A."/>
            <person name="Venter J.C."/>
            <person name="Tettelin H."/>
            <person name="Bryant D.A."/>
            <person name="Fraser C.M."/>
        </authorList>
    </citation>
    <scope>NUCLEOTIDE SEQUENCE [LARGE SCALE GENOMIC DNA]</scope>
    <source>
        <strain>ATCC 49652 / DSM 12025 / NBRC 103806 / TLS</strain>
    </source>
</reference>
<sequence length="545" mass="58080">MTAKDILFDAEARTKLKVGVDKLANAVKVTLGPAGRNVLIDKKFGAPTSTKDGVTVAKEIELVDPVENMGAQMVREVASKTSDVAGDGTTTATVLAQAIYREGLKNVTAGARPIDLKRGIDRAVKEVVAELRNISRSISGKKEIAQVGTISANNDPEIGELIAEAMDKVGKDGVITVEEAKGMETELKVVEGMQFDRGYLSPYFVTNSETMEAELDEALILIHDKKISNMKELLPILEKAAQSGRPLLIIAEDIEGEALATLVVNKLRGTLKVAAVKAPGFGDRRKAMLEDIAILTGGTVISEEKGYKLENATMAYLGQAARITIDKDNTTIVEGKGKQEEIKARINEIKGQIEKSTSDYDTEKLQERLAKLSGGVAVLKIGASTEVEMKEKKARVEDALHATRAAVQEGIVVGGGVALIRAAKGLAKAVADNEDQKTGIEIIRRALEEPLRQIVANTGTTDGAVVLEKVKNAEGDYGFNARTEQYENLIEAGVVDPTKVTRSALENAASVASILLTTEAAITDVKEDKADMPAMPPGGMGGGMY</sequence>
<dbReference type="EC" id="5.6.1.7" evidence="1"/>
<dbReference type="EMBL" id="AE006470">
    <property type="protein sequence ID" value="AAM71772.1"/>
    <property type="molecule type" value="Genomic_DNA"/>
</dbReference>
<dbReference type="RefSeq" id="NP_661430.1">
    <property type="nucleotide sequence ID" value="NC_002932.3"/>
</dbReference>
<dbReference type="RefSeq" id="WP_010932217.1">
    <property type="nucleotide sequence ID" value="NC_002932.3"/>
</dbReference>
<dbReference type="PDB" id="5DA8">
    <property type="method" value="X-ray"/>
    <property type="resolution" value="3.00 A"/>
    <property type="chains" value="A/B/C/D/E/F/G/H/I/J/K/L/M/N/O/P/Q/R/S/T/U/V/W/X/Y/Z/a/b=1-545"/>
</dbReference>
<dbReference type="PDBsum" id="5DA8"/>
<dbReference type="SMR" id="Q8KF02"/>
<dbReference type="STRING" id="194439.CT0530"/>
<dbReference type="EnsemblBacteria" id="AAM71772">
    <property type="protein sequence ID" value="AAM71772"/>
    <property type="gene ID" value="CT0530"/>
</dbReference>
<dbReference type="KEGG" id="cte:CT0530"/>
<dbReference type="PATRIC" id="fig|194439.7.peg.498"/>
<dbReference type="eggNOG" id="COG0459">
    <property type="taxonomic scope" value="Bacteria"/>
</dbReference>
<dbReference type="HOGENOM" id="CLU_016503_3_0_10"/>
<dbReference type="OrthoDB" id="9766614at2"/>
<dbReference type="Proteomes" id="UP000001007">
    <property type="component" value="Chromosome"/>
</dbReference>
<dbReference type="GO" id="GO:0005737">
    <property type="term" value="C:cytoplasm"/>
    <property type="evidence" value="ECO:0007669"/>
    <property type="project" value="UniProtKB-SubCell"/>
</dbReference>
<dbReference type="GO" id="GO:0005524">
    <property type="term" value="F:ATP binding"/>
    <property type="evidence" value="ECO:0007669"/>
    <property type="project" value="UniProtKB-UniRule"/>
</dbReference>
<dbReference type="GO" id="GO:0140662">
    <property type="term" value="F:ATP-dependent protein folding chaperone"/>
    <property type="evidence" value="ECO:0007669"/>
    <property type="project" value="InterPro"/>
</dbReference>
<dbReference type="GO" id="GO:0016853">
    <property type="term" value="F:isomerase activity"/>
    <property type="evidence" value="ECO:0007669"/>
    <property type="project" value="UniProtKB-KW"/>
</dbReference>
<dbReference type="GO" id="GO:0051082">
    <property type="term" value="F:unfolded protein binding"/>
    <property type="evidence" value="ECO:0007669"/>
    <property type="project" value="UniProtKB-UniRule"/>
</dbReference>
<dbReference type="GO" id="GO:0042026">
    <property type="term" value="P:protein refolding"/>
    <property type="evidence" value="ECO:0007669"/>
    <property type="project" value="UniProtKB-UniRule"/>
</dbReference>
<dbReference type="CDD" id="cd03344">
    <property type="entry name" value="GroEL"/>
    <property type="match status" value="1"/>
</dbReference>
<dbReference type="FunFam" id="3.50.7.10:FF:000001">
    <property type="entry name" value="60 kDa chaperonin"/>
    <property type="match status" value="1"/>
</dbReference>
<dbReference type="Gene3D" id="3.50.7.10">
    <property type="entry name" value="GroEL"/>
    <property type="match status" value="1"/>
</dbReference>
<dbReference type="Gene3D" id="1.10.560.10">
    <property type="entry name" value="GroEL-like equatorial domain"/>
    <property type="match status" value="1"/>
</dbReference>
<dbReference type="Gene3D" id="3.30.260.10">
    <property type="entry name" value="TCP-1-like chaperonin intermediate domain"/>
    <property type="match status" value="1"/>
</dbReference>
<dbReference type="HAMAP" id="MF_00600">
    <property type="entry name" value="CH60"/>
    <property type="match status" value="1"/>
</dbReference>
<dbReference type="InterPro" id="IPR018370">
    <property type="entry name" value="Chaperonin_Cpn60_CS"/>
</dbReference>
<dbReference type="InterPro" id="IPR001844">
    <property type="entry name" value="Cpn60/GroEL"/>
</dbReference>
<dbReference type="InterPro" id="IPR002423">
    <property type="entry name" value="Cpn60/GroEL/TCP-1"/>
</dbReference>
<dbReference type="InterPro" id="IPR027409">
    <property type="entry name" value="GroEL-like_apical_dom_sf"/>
</dbReference>
<dbReference type="InterPro" id="IPR027413">
    <property type="entry name" value="GROEL-like_equatorial_sf"/>
</dbReference>
<dbReference type="InterPro" id="IPR027410">
    <property type="entry name" value="TCP-1-like_intermed_sf"/>
</dbReference>
<dbReference type="NCBIfam" id="TIGR02348">
    <property type="entry name" value="GroEL"/>
    <property type="match status" value="1"/>
</dbReference>
<dbReference type="NCBIfam" id="NF000592">
    <property type="entry name" value="PRK00013.1"/>
    <property type="match status" value="1"/>
</dbReference>
<dbReference type="NCBIfam" id="NF009487">
    <property type="entry name" value="PRK12849.1"/>
    <property type="match status" value="1"/>
</dbReference>
<dbReference type="NCBIfam" id="NF009488">
    <property type="entry name" value="PRK12850.1"/>
    <property type="match status" value="1"/>
</dbReference>
<dbReference type="NCBIfam" id="NF009489">
    <property type="entry name" value="PRK12851.1"/>
    <property type="match status" value="1"/>
</dbReference>
<dbReference type="PANTHER" id="PTHR45633">
    <property type="entry name" value="60 KDA HEAT SHOCK PROTEIN, MITOCHONDRIAL"/>
    <property type="match status" value="1"/>
</dbReference>
<dbReference type="Pfam" id="PF00118">
    <property type="entry name" value="Cpn60_TCP1"/>
    <property type="match status" value="1"/>
</dbReference>
<dbReference type="PRINTS" id="PR00298">
    <property type="entry name" value="CHAPERONIN60"/>
</dbReference>
<dbReference type="SUPFAM" id="SSF52029">
    <property type="entry name" value="GroEL apical domain-like"/>
    <property type="match status" value="1"/>
</dbReference>
<dbReference type="SUPFAM" id="SSF48592">
    <property type="entry name" value="GroEL equatorial domain-like"/>
    <property type="match status" value="1"/>
</dbReference>
<dbReference type="SUPFAM" id="SSF54849">
    <property type="entry name" value="GroEL-intermediate domain like"/>
    <property type="match status" value="1"/>
</dbReference>
<dbReference type="PROSITE" id="PS00296">
    <property type="entry name" value="CHAPERONINS_CPN60"/>
    <property type="match status" value="1"/>
</dbReference>
<comment type="function">
    <text evidence="1">Together with its co-chaperonin GroES, plays an essential role in assisting protein folding. The GroEL-GroES system forms a nano-cage that allows encapsulation of the non-native substrate proteins and provides a physical environment optimized to promote and accelerate protein folding.</text>
</comment>
<comment type="catalytic activity">
    <reaction evidence="1">
        <text>ATP + H2O + a folded polypeptide = ADP + phosphate + an unfolded polypeptide.</text>
        <dbReference type="EC" id="5.6.1.7"/>
    </reaction>
</comment>
<comment type="subunit">
    <text evidence="1">Forms a cylinder of 14 subunits composed of two heptameric rings stacked back-to-back. Interacts with the co-chaperonin GroES.</text>
</comment>
<comment type="subcellular location">
    <subcellularLocation>
        <location evidence="1">Cytoplasm</location>
    </subcellularLocation>
</comment>
<comment type="similarity">
    <text evidence="1">Belongs to the chaperonin (HSP60) family.</text>
</comment>